<organism>
    <name type="scientific">Sulfurimonas denitrificans (strain ATCC 33889 / DSM 1251)</name>
    <name type="common">Thiomicrospira denitrificans (strain ATCC 33889 / DSM 1251)</name>
    <dbReference type="NCBI Taxonomy" id="326298"/>
    <lineage>
        <taxon>Bacteria</taxon>
        <taxon>Pseudomonadati</taxon>
        <taxon>Campylobacterota</taxon>
        <taxon>Epsilonproteobacteria</taxon>
        <taxon>Campylobacterales</taxon>
        <taxon>Sulfurimonadaceae</taxon>
        <taxon>Sulfurimonas</taxon>
    </lineage>
</organism>
<proteinExistence type="inferred from homology"/>
<comment type="function">
    <text evidence="1">Catalyzes the decarboxylation of orotidine 5'-monophosphate (OMP) to uridine 5'-monophosphate (UMP).</text>
</comment>
<comment type="catalytic activity">
    <reaction evidence="1">
        <text>orotidine 5'-phosphate + H(+) = UMP + CO2</text>
        <dbReference type="Rhea" id="RHEA:11596"/>
        <dbReference type="ChEBI" id="CHEBI:15378"/>
        <dbReference type="ChEBI" id="CHEBI:16526"/>
        <dbReference type="ChEBI" id="CHEBI:57538"/>
        <dbReference type="ChEBI" id="CHEBI:57865"/>
        <dbReference type="EC" id="4.1.1.23"/>
    </reaction>
</comment>
<comment type="pathway">
    <text evidence="1">Pyrimidine metabolism; UMP biosynthesis via de novo pathway; UMP from orotate: step 2/2.</text>
</comment>
<comment type="subunit">
    <text evidence="1">Homodimer.</text>
</comment>
<comment type="similarity">
    <text evidence="1">Belongs to the OMP decarboxylase family. Type 1 subfamily.</text>
</comment>
<evidence type="ECO:0000255" key="1">
    <source>
        <dbReference type="HAMAP-Rule" id="MF_01200"/>
    </source>
</evidence>
<keyword id="KW-0210">Decarboxylase</keyword>
<keyword id="KW-0456">Lyase</keyword>
<keyword id="KW-0665">Pyrimidine biosynthesis</keyword>
<keyword id="KW-1185">Reference proteome</keyword>
<accession>Q30QK7</accession>
<sequence>MQLCVALDLPTKEENLELIGKIKDYDVWLKVGLRSYIRDGEDFLKDIKKINPDFKIFLDLKLYDIPNTMADAAESIISLGVDMFNVHASAGKRAMREVMVRLERYEKRPIVLAVTALTSFNEDEFGKIYGDSISKKADQFAKDAYESGLDGVVCSAYESSSIKNITNRDFMTLTPGIRPFGEDSGDQQRVADVAFAKNAHVDFIVVGRPIYNSKNPAEVIRRILEQI</sequence>
<protein>
    <recommendedName>
        <fullName evidence="1">Orotidine 5'-phosphate decarboxylase</fullName>
        <ecNumber evidence="1">4.1.1.23</ecNumber>
    </recommendedName>
    <alternativeName>
        <fullName evidence="1">OMP decarboxylase</fullName>
        <shortName evidence="1">OMPDCase</shortName>
        <shortName evidence="1">OMPdecase</shortName>
    </alternativeName>
</protein>
<gene>
    <name evidence="1" type="primary">pyrF</name>
    <name type="ordered locus">Suden_1447</name>
</gene>
<reference key="1">
    <citation type="journal article" date="2008" name="Appl. Environ. Microbiol.">
        <title>Genome of the epsilonproteobacterial chemolithoautotroph Sulfurimonas denitrificans.</title>
        <authorList>
            <person name="Sievert S.M."/>
            <person name="Scott K.M."/>
            <person name="Klotz M.G."/>
            <person name="Chain P.S.G."/>
            <person name="Hauser L.J."/>
            <person name="Hemp J."/>
            <person name="Huegler M."/>
            <person name="Land M."/>
            <person name="Lapidus A."/>
            <person name="Larimer F.W."/>
            <person name="Lucas S."/>
            <person name="Malfatti S.A."/>
            <person name="Meyer F."/>
            <person name="Paulsen I.T."/>
            <person name="Ren Q."/>
            <person name="Simon J."/>
            <person name="Bailey K."/>
            <person name="Diaz E."/>
            <person name="Fitzpatrick K.A."/>
            <person name="Glover B."/>
            <person name="Gwatney N."/>
            <person name="Korajkic A."/>
            <person name="Long A."/>
            <person name="Mobberley J.M."/>
            <person name="Pantry S.N."/>
            <person name="Pazder G."/>
            <person name="Peterson S."/>
            <person name="Quintanilla J.D."/>
            <person name="Sprinkle R."/>
            <person name="Stephens J."/>
            <person name="Thomas P."/>
            <person name="Vaughn R."/>
            <person name="Weber M.J."/>
            <person name="Wooten L.L."/>
        </authorList>
    </citation>
    <scope>NUCLEOTIDE SEQUENCE [LARGE SCALE GENOMIC DNA]</scope>
    <source>
        <strain>ATCC 33889 / DSM 1251</strain>
    </source>
</reference>
<feature type="chain" id="PRO_0000241927" description="Orotidine 5'-phosphate decarboxylase">
    <location>
        <begin position="1"/>
        <end position="227"/>
    </location>
</feature>
<feature type="active site" description="Proton donor" evidence="1">
    <location>
        <position position="61"/>
    </location>
</feature>
<feature type="binding site" evidence="1">
    <location>
        <position position="8"/>
    </location>
    <ligand>
        <name>substrate</name>
    </ligand>
</feature>
<feature type="binding site" evidence="1">
    <location>
        <position position="30"/>
    </location>
    <ligand>
        <name>substrate</name>
    </ligand>
</feature>
<feature type="binding site" evidence="1">
    <location>
        <begin position="59"/>
        <end position="68"/>
    </location>
    <ligand>
        <name>substrate</name>
    </ligand>
</feature>
<feature type="binding site" evidence="1">
    <location>
        <position position="118"/>
    </location>
    <ligand>
        <name>substrate</name>
    </ligand>
</feature>
<feature type="binding site" evidence="1">
    <location>
        <position position="178"/>
    </location>
    <ligand>
        <name>substrate</name>
    </ligand>
</feature>
<feature type="binding site" evidence="1">
    <location>
        <position position="187"/>
    </location>
    <ligand>
        <name>substrate</name>
    </ligand>
</feature>
<feature type="binding site" evidence="1">
    <location>
        <position position="207"/>
    </location>
    <ligand>
        <name>substrate</name>
    </ligand>
</feature>
<feature type="binding site" evidence="1">
    <location>
        <position position="208"/>
    </location>
    <ligand>
        <name>substrate</name>
    </ligand>
</feature>
<name>PYRF_SULDN</name>
<dbReference type="EC" id="4.1.1.23" evidence="1"/>
<dbReference type="EMBL" id="CP000153">
    <property type="protein sequence ID" value="ABB44724.1"/>
    <property type="molecule type" value="Genomic_DNA"/>
</dbReference>
<dbReference type="RefSeq" id="WP_011373076.1">
    <property type="nucleotide sequence ID" value="NC_007575.1"/>
</dbReference>
<dbReference type="SMR" id="Q30QK7"/>
<dbReference type="STRING" id="326298.Suden_1447"/>
<dbReference type="KEGG" id="tdn:Suden_1447"/>
<dbReference type="eggNOG" id="COG0284">
    <property type="taxonomic scope" value="Bacteria"/>
</dbReference>
<dbReference type="HOGENOM" id="CLU_067069_1_1_7"/>
<dbReference type="OrthoDB" id="9806203at2"/>
<dbReference type="UniPathway" id="UPA00070">
    <property type="reaction ID" value="UER00120"/>
</dbReference>
<dbReference type="Proteomes" id="UP000002714">
    <property type="component" value="Chromosome"/>
</dbReference>
<dbReference type="GO" id="GO:0005829">
    <property type="term" value="C:cytosol"/>
    <property type="evidence" value="ECO:0007669"/>
    <property type="project" value="TreeGrafter"/>
</dbReference>
<dbReference type="GO" id="GO:0004590">
    <property type="term" value="F:orotidine-5'-phosphate decarboxylase activity"/>
    <property type="evidence" value="ECO:0007669"/>
    <property type="project" value="UniProtKB-UniRule"/>
</dbReference>
<dbReference type="GO" id="GO:0006207">
    <property type="term" value="P:'de novo' pyrimidine nucleobase biosynthetic process"/>
    <property type="evidence" value="ECO:0007669"/>
    <property type="project" value="InterPro"/>
</dbReference>
<dbReference type="GO" id="GO:0044205">
    <property type="term" value="P:'de novo' UMP biosynthetic process"/>
    <property type="evidence" value="ECO:0007669"/>
    <property type="project" value="UniProtKB-UniRule"/>
</dbReference>
<dbReference type="CDD" id="cd04725">
    <property type="entry name" value="OMP_decarboxylase_like"/>
    <property type="match status" value="1"/>
</dbReference>
<dbReference type="Gene3D" id="3.20.20.70">
    <property type="entry name" value="Aldolase class I"/>
    <property type="match status" value="1"/>
</dbReference>
<dbReference type="HAMAP" id="MF_01200_B">
    <property type="entry name" value="OMPdecase_type1_B"/>
    <property type="match status" value="1"/>
</dbReference>
<dbReference type="InterPro" id="IPR013785">
    <property type="entry name" value="Aldolase_TIM"/>
</dbReference>
<dbReference type="InterPro" id="IPR014732">
    <property type="entry name" value="OMPdecase"/>
</dbReference>
<dbReference type="InterPro" id="IPR018089">
    <property type="entry name" value="OMPdecase_AS"/>
</dbReference>
<dbReference type="InterPro" id="IPR047596">
    <property type="entry name" value="OMPdecase_bac"/>
</dbReference>
<dbReference type="InterPro" id="IPR001754">
    <property type="entry name" value="OMPdeCOase_dom"/>
</dbReference>
<dbReference type="InterPro" id="IPR011060">
    <property type="entry name" value="RibuloseP-bd_barrel"/>
</dbReference>
<dbReference type="NCBIfam" id="NF001273">
    <property type="entry name" value="PRK00230.1"/>
    <property type="match status" value="1"/>
</dbReference>
<dbReference type="NCBIfam" id="TIGR01740">
    <property type="entry name" value="pyrF"/>
    <property type="match status" value="1"/>
</dbReference>
<dbReference type="PANTHER" id="PTHR32119">
    <property type="entry name" value="OROTIDINE 5'-PHOSPHATE DECARBOXYLASE"/>
    <property type="match status" value="1"/>
</dbReference>
<dbReference type="PANTHER" id="PTHR32119:SF2">
    <property type="entry name" value="OROTIDINE 5'-PHOSPHATE DECARBOXYLASE"/>
    <property type="match status" value="1"/>
</dbReference>
<dbReference type="Pfam" id="PF00215">
    <property type="entry name" value="OMPdecase"/>
    <property type="match status" value="1"/>
</dbReference>
<dbReference type="SMART" id="SM00934">
    <property type="entry name" value="OMPdecase"/>
    <property type="match status" value="1"/>
</dbReference>
<dbReference type="SUPFAM" id="SSF51366">
    <property type="entry name" value="Ribulose-phoshate binding barrel"/>
    <property type="match status" value="1"/>
</dbReference>
<dbReference type="PROSITE" id="PS00156">
    <property type="entry name" value="OMPDECASE"/>
    <property type="match status" value="1"/>
</dbReference>